<dbReference type="EC" id="6.1.1.5" evidence="1"/>
<dbReference type="EMBL" id="BA000001">
    <property type="protein sequence ID" value="BAA30164.1"/>
    <property type="molecule type" value="Genomic_DNA"/>
</dbReference>
<dbReference type="PIR" id="F71100">
    <property type="entry name" value="F71100"/>
</dbReference>
<dbReference type="RefSeq" id="WP_010885154.1">
    <property type="nucleotide sequence ID" value="NC_000961.1"/>
</dbReference>
<dbReference type="SMR" id="O58792"/>
<dbReference type="STRING" id="70601.gene:9378024"/>
<dbReference type="EnsemblBacteria" id="BAA30164">
    <property type="protein sequence ID" value="BAA30164"/>
    <property type="gene ID" value="BAA30164"/>
</dbReference>
<dbReference type="GeneID" id="1443389"/>
<dbReference type="KEGG" id="pho:PH1065"/>
<dbReference type="eggNOG" id="arCOG00807">
    <property type="taxonomic scope" value="Archaea"/>
</dbReference>
<dbReference type="OrthoDB" id="30823at2157"/>
<dbReference type="Proteomes" id="UP000000752">
    <property type="component" value="Chromosome"/>
</dbReference>
<dbReference type="GO" id="GO:0005737">
    <property type="term" value="C:cytoplasm"/>
    <property type="evidence" value="ECO:0007669"/>
    <property type="project" value="UniProtKB-SubCell"/>
</dbReference>
<dbReference type="GO" id="GO:0002161">
    <property type="term" value="F:aminoacyl-tRNA deacylase activity"/>
    <property type="evidence" value="ECO:0007669"/>
    <property type="project" value="InterPro"/>
</dbReference>
<dbReference type="GO" id="GO:0005524">
    <property type="term" value="F:ATP binding"/>
    <property type="evidence" value="ECO:0007669"/>
    <property type="project" value="UniProtKB-UniRule"/>
</dbReference>
<dbReference type="GO" id="GO:0004822">
    <property type="term" value="F:isoleucine-tRNA ligase activity"/>
    <property type="evidence" value="ECO:0007669"/>
    <property type="project" value="UniProtKB-UniRule"/>
</dbReference>
<dbReference type="GO" id="GO:0000049">
    <property type="term" value="F:tRNA binding"/>
    <property type="evidence" value="ECO:0007669"/>
    <property type="project" value="InterPro"/>
</dbReference>
<dbReference type="GO" id="GO:0008270">
    <property type="term" value="F:zinc ion binding"/>
    <property type="evidence" value="ECO:0007669"/>
    <property type="project" value="UniProtKB-UniRule"/>
</dbReference>
<dbReference type="GO" id="GO:0006428">
    <property type="term" value="P:isoleucyl-tRNA aminoacylation"/>
    <property type="evidence" value="ECO:0007669"/>
    <property type="project" value="UniProtKB-UniRule"/>
</dbReference>
<dbReference type="CDD" id="cd07961">
    <property type="entry name" value="Anticodon_Ia_Ile_ABEc"/>
    <property type="match status" value="1"/>
</dbReference>
<dbReference type="CDD" id="cd00818">
    <property type="entry name" value="IleRS_core"/>
    <property type="match status" value="1"/>
</dbReference>
<dbReference type="FunFam" id="3.40.50.620:FF:000325">
    <property type="entry name" value="Isoleucine--tRNA ligase"/>
    <property type="match status" value="1"/>
</dbReference>
<dbReference type="FunFam" id="1.10.730.10:FF:000033">
    <property type="entry name" value="Valine--tRNA ligase"/>
    <property type="match status" value="1"/>
</dbReference>
<dbReference type="Gene3D" id="3.30.720.200">
    <property type="match status" value="1"/>
</dbReference>
<dbReference type="Gene3D" id="3.40.50.620">
    <property type="entry name" value="HUPs"/>
    <property type="match status" value="2"/>
</dbReference>
<dbReference type="Gene3D" id="1.10.730.10">
    <property type="entry name" value="Isoleucyl-tRNA Synthetase, Domain 1"/>
    <property type="match status" value="1"/>
</dbReference>
<dbReference type="Gene3D" id="3.90.740.10">
    <property type="entry name" value="Valyl/Leucyl/Isoleucyl-tRNA synthetase, editing domain"/>
    <property type="match status" value="1"/>
</dbReference>
<dbReference type="HAMAP" id="MF_02003">
    <property type="entry name" value="Ile_tRNA_synth_type2"/>
    <property type="match status" value="1"/>
</dbReference>
<dbReference type="InterPro" id="IPR001412">
    <property type="entry name" value="aa-tRNA-synth_I_CS"/>
</dbReference>
<dbReference type="InterPro" id="IPR002300">
    <property type="entry name" value="aa-tRNA-synth_Ia"/>
</dbReference>
<dbReference type="InterPro" id="IPR033709">
    <property type="entry name" value="Anticodon_Ile_ABEc"/>
</dbReference>
<dbReference type="InterPro" id="IPR002301">
    <property type="entry name" value="Ile-tRNA-ligase"/>
</dbReference>
<dbReference type="InterPro" id="IPR023586">
    <property type="entry name" value="Ile-tRNA-ligase_type2"/>
</dbReference>
<dbReference type="InterPro" id="IPR013155">
    <property type="entry name" value="M/V/L/I-tRNA-synth_anticd-bd"/>
</dbReference>
<dbReference type="InterPro" id="IPR014729">
    <property type="entry name" value="Rossmann-like_a/b/a_fold"/>
</dbReference>
<dbReference type="InterPro" id="IPR009080">
    <property type="entry name" value="tRNAsynth_Ia_anticodon-bd"/>
</dbReference>
<dbReference type="InterPro" id="IPR009008">
    <property type="entry name" value="Val/Leu/Ile-tRNA-synth_edit"/>
</dbReference>
<dbReference type="NCBIfam" id="TIGR00392">
    <property type="entry name" value="ileS"/>
    <property type="match status" value="1"/>
</dbReference>
<dbReference type="PANTHER" id="PTHR42780:SF1">
    <property type="entry name" value="ISOLEUCINE--TRNA LIGASE, CYTOPLASMIC"/>
    <property type="match status" value="1"/>
</dbReference>
<dbReference type="PANTHER" id="PTHR42780">
    <property type="entry name" value="SOLEUCYL-TRNA SYNTHETASE"/>
    <property type="match status" value="1"/>
</dbReference>
<dbReference type="Pfam" id="PF08264">
    <property type="entry name" value="Anticodon_1"/>
    <property type="match status" value="1"/>
</dbReference>
<dbReference type="Pfam" id="PF19302">
    <property type="entry name" value="DUF5915"/>
    <property type="match status" value="1"/>
</dbReference>
<dbReference type="Pfam" id="PF00133">
    <property type="entry name" value="tRNA-synt_1"/>
    <property type="match status" value="1"/>
</dbReference>
<dbReference type="PRINTS" id="PR00984">
    <property type="entry name" value="TRNASYNTHILE"/>
</dbReference>
<dbReference type="SUPFAM" id="SSF47323">
    <property type="entry name" value="Anticodon-binding domain of a subclass of class I aminoacyl-tRNA synthetases"/>
    <property type="match status" value="2"/>
</dbReference>
<dbReference type="SUPFAM" id="SSF52374">
    <property type="entry name" value="Nucleotidylyl transferase"/>
    <property type="match status" value="1"/>
</dbReference>
<dbReference type="SUPFAM" id="SSF50677">
    <property type="entry name" value="ValRS/IleRS/LeuRS editing domain"/>
    <property type="match status" value="1"/>
</dbReference>
<dbReference type="PROSITE" id="PS00178">
    <property type="entry name" value="AA_TRNA_LIGASE_I"/>
    <property type="match status" value="1"/>
</dbReference>
<organism>
    <name type="scientific">Pyrococcus horikoshii (strain ATCC 700860 / DSM 12428 / JCM 9974 / NBRC 100139 / OT-3)</name>
    <dbReference type="NCBI Taxonomy" id="70601"/>
    <lineage>
        <taxon>Archaea</taxon>
        <taxon>Methanobacteriati</taxon>
        <taxon>Methanobacteriota</taxon>
        <taxon>Thermococci</taxon>
        <taxon>Thermococcales</taxon>
        <taxon>Thermococcaceae</taxon>
        <taxon>Pyrococcus</taxon>
    </lineage>
</organism>
<accession>O58792</accession>
<feature type="chain" id="PRO_0000098590" description="Isoleucine--tRNA ligase">
    <location>
        <begin position="1"/>
        <end position="1066"/>
    </location>
</feature>
<feature type="short sequence motif" description="'HIGH' region">
    <location>
        <begin position="49"/>
        <end position="59"/>
    </location>
</feature>
<feature type="short sequence motif" description="'KMSKS' region">
    <location>
        <begin position="625"/>
        <end position="629"/>
    </location>
</feature>
<feature type="binding site" evidence="1">
    <location>
        <position position="628"/>
    </location>
    <ligand>
        <name>ATP</name>
        <dbReference type="ChEBI" id="CHEBI:30616"/>
    </ligand>
</feature>
<comment type="function">
    <text evidence="1">Catalyzes the attachment of isoleucine to tRNA(Ile). As IleRS can inadvertently accommodate and process structurally similar amino acids such as valine, to avoid such errors it has two additional distinct tRNA(Ile)-dependent editing activities. One activity is designated as 'pretransfer' editing and involves the hydrolysis of activated Val-AMP. The other activity is designated 'posttransfer' editing and involves deacylation of mischarged Val-tRNA(Ile).</text>
</comment>
<comment type="catalytic activity">
    <reaction evidence="1">
        <text>tRNA(Ile) + L-isoleucine + ATP = L-isoleucyl-tRNA(Ile) + AMP + diphosphate</text>
        <dbReference type="Rhea" id="RHEA:11060"/>
        <dbReference type="Rhea" id="RHEA-COMP:9666"/>
        <dbReference type="Rhea" id="RHEA-COMP:9695"/>
        <dbReference type="ChEBI" id="CHEBI:30616"/>
        <dbReference type="ChEBI" id="CHEBI:33019"/>
        <dbReference type="ChEBI" id="CHEBI:58045"/>
        <dbReference type="ChEBI" id="CHEBI:78442"/>
        <dbReference type="ChEBI" id="CHEBI:78528"/>
        <dbReference type="ChEBI" id="CHEBI:456215"/>
        <dbReference type="EC" id="6.1.1.5"/>
    </reaction>
</comment>
<comment type="cofactor">
    <cofactor evidence="1">
        <name>Zn(2+)</name>
        <dbReference type="ChEBI" id="CHEBI:29105"/>
    </cofactor>
</comment>
<comment type="subunit">
    <text evidence="1">Monomer.</text>
</comment>
<comment type="subcellular location">
    <subcellularLocation>
        <location evidence="1">Cytoplasm</location>
    </subcellularLocation>
</comment>
<comment type="domain">
    <text evidence="1">IleRS has two distinct active sites: one for aminoacylation and one for editing. The misactivated valine is translocated from the active site to the editing site, which sterically excludes the correctly activated isoleucine. The single editing site contains two valyl binding pockets, one specific for each substrate (Val-AMP or Val-tRNA(Ile)).</text>
</comment>
<comment type="similarity">
    <text evidence="1">Belongs to the class-I aminoacyl-tRNA synthetase family. IleS type 2 subfamily.</text>
</comment>
<name>SYI_PYRHO</name>
<evidence type="ECO:0000255" key="1">
    <source>
        <dbReference type="HAMAP-Rule" id="MF_02003"/>
    </source>
</evidence>
<gene>
    <name evidence="1" type="primary">ileS</name>
    <name type="ordered locus">PH1065</name>
</gene>
<sequence>MIKEPEFRDYTPGKLEEKIEEFWKENNIYQKIKELRKNGPKYYFLDGPPYVSGAIHLGTAWNKIIKDMIIRFRTMQGYNVWRQPGFDMHGLPIEVKVEQALGLKTKKEIEEKIGVENFIKKCKEFALNNLKIMTEQFKMLGIWMDWDDPYMTIKNEYIESAWFTLKKAWEKGLLEKDKRVLHWCPRCETALAEHEVRGEYKLRKDPSIYVKFPIEGKENEYLLIWTTTPWTLPANLAVSAHPEYDYVKVKVEFNGKEEYWILAKALVDKVLGEIGVKGEVIEEFKGRELEGLRYIHVLMDEYPRQKEFREKYEWAHRIILADFVTLEEGTGLVHTAPGHGEEDFEVGKKYGLPIYSPVDDQGRYVEGKWKGIYVKEADPQIIEHLKEKGYLVKAGEIEHKYPHCWRCKTPLIFRATDQWFLKVSKVKDRIIKENDEKVTWYPDWVKIRFDNGVRDSGDWVISRQRYWGIPLPIWQSEDGEIYVVGSWRELVELAVAIEVNGERIDLPESYEEKLKVIEEKLGPEDLHRPYVDAFIIKVNGKEMRRVKDVVDVWFDSGIASWASLGYPRNKELFEKLWPADFIVEGEDQVTKWFYSQQAASVIAFDTVPYRRVAMHGYVLDEKGDKMSKSLGNIIRPEEVVEKAGRDTFRFYMLWATNPWENLKFSWKGVEQVRRMLNILWNVYVLSATYMSLDNFDPRNVKVEELAFREEDKWILSRVNSLIREVENGIETFYLTKATRALYNFVVEDLSRWYVRLIRKRLWVEGDDPDKLAAYYTLWKVFDVLLRLMAPFTPYITEEIYQNLMRPFIGIESVHMLDWPKVDESAVDEDLEKEMEFIRRIVEAGSAARQKARIKLRYPVRKIIIETQDETVKKAVERLNYILRDQLNAKEVVIGKVERELTVKPNFAKVGPEFKGDSRLVAKWINEHGLELYEKGEVDVEIEGKKFHLTREHIIVEEKLPDFLVAEDFEGGRVYVDKTLTRELLAEGLAREFVRRIQEMRKRLDLDVNDRIVVTIETTDDNRELLQENLDYIMRETRAIEVRFEEAKGYVVEWPEVQAKIGIEKVE</sequence>
<proteinExistence type="inferred from homology"/>
<keyword id="KW-0030">Aminoacyl-tRNA synthetase</keyword>
<keyword id="KW-0067">ATP-binding</keyword>
<keyword id="KW-0963">Cytoplasm</keyword>
<keyword id="KW-0436">Ligase</keyword>
<keyword id="KW-0479">Metal-binding</keyword>
<keyword id="KW-0547">Nucleotide-binding</keyword>
<keyword id="KW-0648">Protein biosynthesis</keyword>
<keyword id="KW-0862">Zinc</keyword>
<reference key="1">
    <citation type="journal article" date="1998" name="DNA Res.">
        <title>Complete sequence and gene organization of the genome of a hyper-thermophilic archaebacterium, Pyrococcus horikoshii OT3.</title>
        <authorList>
            <person name="Kawarabayasi Y."/>
            <person name="Sawada M."/>
            <person name="Horikawa H."/>
            <person name="Haikawa Y."/>
            <person name="Hino Y."/>
            <person name="Yamamoto S."/>
            <person name="Sekine M."/>
            <person name="Baba S."/>
            <person name="Kosugi H."/>
            <person name="Hosoyama A."/>
            <person name="Nagai Y."/>
            <person name="Sakai M."/>
            <person name="Ogura K."/>
            <person name="Otsuka R."/>
            <person name="Nakazawa H."/>
            <person name="Takamiya M."/>
            <person name="Ohfuku Y."/>
            <person name="Funahashi T."/>
            <person name="Tanaka T."/>
            <person name="Kudoh Y."/>
            <person name="Yamazaki J."/>
            <person name="Kushida N."/>
            <person name="Oguchi A."/>
            <person name="Aoki K."/>
            <person name="Yoshizawa T."/>
            <person name="Nakamura Y."/>
            <person name="Robb F.T."/>
            <person name="Horikoshi K."/>
            <person name="Masuchi Y."/>
            <person name="Shizuya H."/>
            <person name="Kikuchi H."/>
        </authorList>
    </citation>
    <scope>NUCLEOTIDE SEQUENCE [LARGE SCALE GENOMIC DNA]</scope>
    <source>
        <strain>ATCC 700860 / DSM 12428 / JCM 9974 / NBRC 100139 / OT-3</strain>
    </source>
</reference>
<protein>
    <recommendedName>
        <fullName evidence="1">Isoleucine--tRNA ligase</fullName>
        <ecNumber evidence="1">6.1.1.5</ecNumber>
    </recommendedName>
    <alternativeName>
        <fullName evidence="1">Isoleucyl-tRNA synthetase</fullName>
        <shortName evidence="1">IleRS</shortName>
    </alternativeName>
</protein>